<name>METXA_BRADU</name>
<sequence>MVGVTSISSPAISADERSHEVDHPSSLVAHFGADQPLPLDCGIDLTPFQIAYQTYGELNADRSNAILICHALTGDQHVANVHPVTGKPGWWETLVGAGRPLDPSQYFIICANVIGGCMGSTGPASINPATGKVWGLDFPVITIPDMVRAQAMLIDRLGIDTLFAVVGGSMGGMQVLQWTAAYPERVYSALAIACSTRHSAQNIAFHELGRQAVMADPDWHNGGYADRGIHPHRGLAVARMAAHITYLSDAALHRKFGRRMQDRDLPTFSFDADFQVESYLRYQGSSFVERFDANSYLYLTRAMDYFDIAGDHGGVLAKAFAGIKTRFCVVSFTSDWLFPTSESRALVHALNASSARVSFAEIETDRGHDAFLLDVPEFFDIARAFLESAGKARGLNGRGG</sequence>
<proteinExistence type="inferred from homology"/>
<dbReference type="EC" id="2.3.1.31" evidence="1"/>
<dbReference type="EMBL" id="BA000040">
    <property type="protein sequence ID" value="BAC46664.1"/>
    <property type="molecule type" value="Genomic_DNA"/>
</dbReference>
<dbReference type="RefSeq" id="NP_768039.1">
    <property type="nucleotide sequence ID" value="NC_004463.1"/>
</dbReference>
<dbReference type="RefSeq" id="WP_011084216.1">
    <property type="nucleotide sequence ID" value="NC_004463.1"/>
</dbReference>
<dbReference type="SMR" id="Q89UL7"/>
<dbReference type="STRING" id="224911.AAV28_03910"/>
<dbReference type="ESTHER" id="braja-METX">
    <property type="family name" value="Homoserine_transacetylase"/>
</dbReference>
<dbReference type="EnsemblBacteria" id="BAC46664">
    <property type="protein sequence ID" value="BAC46664"/>
    <property type="gene ID" value="BAC46664"/>
</dbReference>
<dbReference type="GeneID" id="46488668"/>
<dbReference type="KEGG" id="bja:blr1399"/>
<dbReference type="PATRIC" id="fig|224911.44.peg.822"/>
<dbReference type="eggNOG" id="COG2021">
    <property type="taxonomic scope" value="Bacteria"/>
</dbReference>
<dbReference type="HOGENOM" id="CLU_028760_1_2_5"/>
<dbReference type="InParanoid" id="Q89UL7"/>
<dbReference type="OrthoDB" id="9800754at2"/>
<dbReference type="PhylomeDB" id="Q89UL7"/>
<dbReference type="UniPathway" id="UPA00051">
    <property type="reaction ID" value="UER00074"/>
</dbReference>
<dbReference type="Proteomes" id="UP000002526">
    <property type="component" value="Chromosome"/>
</dbReference>
<dbReference type="GO" id="GO:0005737">
    <property type="term" value="C:cytoplasm"/>
    <property type="evidence" value="ECO:0007669"/>
    <property type="project" value="UniProtKB-SubCell"/>
</dbReference>
<dbReference type="GO" id="GO:0004414">
    <property type="term" value="F:homoserine O-acetyltransferase activity"/>
    <property type="evidence" value="ECO:0000318"/>
    <property type="project" value="GO_Central"/>
</dbReference>
<dbReference type="GO" id="GO:0009086">
    <property type="term" value="P:methionine biosynthetic process"/>
    <property type="evidence" value="ECO:0000318"/>
    <property type="project" value="GO_Central"/>
</dbReference>
<dbReference type="FunFam" id="1.10.1740.110:FF:000001">
    <property type="entry name" value="Homoserine O-acetyltransferase"/>
    <property type="match status" value="1"/>
</dbReference>
<dbReference type="Gene3D" id="1.10.1740.110">
    <property type="match status" value="1"/>
</dbReference>
<dbReference type="Gene3D" id="3.40.50.1820">
    <property type="entry name" value="alpha/beta hydrolase"/>
    <property type="match status" value="1"/>
</dbReference>
<dbReference type="HAMAP" id="MF_00296">
    <property type="entry name" value="MetX_acyltransf"/>
    <property type="match status" value="1"/>
</dbReference>
<dbReference type="InterPro" id="IPR000073">
    <property type="entry name" value="AB_hydrolase_1"/>
</dbReference>
<dbReference type="InterPro" id="IPR029058">
    <property type="entry name" value="AB_hydrolase_fold"/>
</dbReference>
<dbReference type="InterPro" id="IPR008220">
    <property type="entry name" value="HAT_MetX-like"/>
</dbReference>
<dbReference type="NCBIfam" id="TIGR01392">
    <property type="entry name" value="homoserO_Ac_trn"/>
    <property type="match status" value="1"/>
</dbReference>
<dbReference type="NCBIfam" id="NF001209">
    <property type="entry name" value="PRK00175.1"/>
    <property type="match status" value="1"/>
</dbReference>
<dbReference type="PANTHER" id="PTHR32268">
    <property type="entry name" value="HOMOSERINE O-ACETYLTRANSFERASE"/>
    <property type="match status" value="1"/>
</dbReference>
<dbReference type="PANTHER" id="PTHR32268:SF11">
    <property type="entry name" value="HOMOSERINE O-ACETYLTRANSFERASE"/>
    <property type="match status" value="1"/>
</dbReference>
<dbReference type="Pfam" id="PF00561">
    <property type="entry name" value="Abhydrolase_1"/>
    <property type="match status" value="1"/>
</dbReference>
<dbReference type="PIRSF" id="PIRSF000443">
    <property type="entry name" value="Homoser_Ac_trans"/>
    <property type="match status" value="1"/>
</dbReference>
<dbReference type="SUPFAM" id="SSF53474">
    <property type="entry name" value="alpha/beta-Hydrolases"/>
    <property type="match status" value="1"/>
</dbReference>
<keyword id="KW-0012">Acyltransferase</keyword>
<keyword id="KW-0028">Amino-acid biosynthesis</keyword>
<keyword id="KW-0963">Cytoplasm</keyword>
<keyword id="KW-0486">Methionine biosynthesis</keyword>
<keyword id="KW-1185">Reference proteome</keyword>
<keyword id="KW-0808">Transferase</keyword>
<organism>
    <name type="scientific">Bradyrhizobium diazoefficiens (strain JCM 10833 / BCRC 13528 / IAM 13628 / NBRC 14792 / USDA 110)</name>
    <dbReference type="NCBI Taxonomy" id="224911"/>
    <lineage>
        <taxon>Bacteria</taxon>
        <taxon>Pseudomonadati</taxon>
        <taxon>Pseudomonadota</taxon>
        <taxon>Alphaproteobacteria</taxon>
        <taxon>Hyphomicrobiales</taxon>
        <taxon>Nitrobacteraceae</taxon>
        <taxon>Bradyrhizobium</taxon>
    </lineage>
</organism>
<feature type="chain" id="PRO_0000155707" description="Homoserine O-acetyltransferase">
    <location>
        <begin position="1"/>
        <end position="400"/>
    </location>
</feature>
<feature type="domain" description="AB hydrolase-1" evidence="1">
    <location>
        <begin position="64"/>
        <end position="373"/>
    </location>
</feature>
<feature type="active site" description="Nucleophile" evidence="1">
    <location>
        <position position="169"/>
    </location>
</feature>
<feature type="active site" evidence="1">
    <location>
        <position position="335"/>
    </location>
</feature>
<feature type="active site" evidence="1">
    <location>
        <position position="368"/>
    </location>
</feature>
<feature type="binding site" evidence="1">
    <location>
        <position position="239"/>
    </location>
    <ligand>
        <name>substrate</name>
    </ligand>
</feature>
<feature type="binding site" evidence="1">
    <location>
        <position position="369"/>
    </location>
    <ligand>
        <name>substrate</name>
    </ligand>
</feature>
<gene>
    <name evidence="1" type="primary">metXA</name>
    <name type="ordered locus">blr1399</name>
</gene>
<evidence type="ECO:0000255" key="1">
    <source>
        <dbReference type="HAMAP-Rule" id="MF_00296"/>
    </source>
</evidence>
<reference key="1">
    <citation type="journal article" date="2002" name="DNA Res.">
        <title>Complete genomic sequence of nitrogen-fixing symbiotic bacterium Bradyrhizobium japonicum USDA110.</title>
        <authorList>
            <person name="Kaneko T."/>
            <person name="Nakamura Y."/>
            <person name="Sato S."/>
            <person name="Minamisawa K."/>
            <person name="Uchiumi T."/>
            <person name="Sasamoto S."/>
            <person name="Watanabe A."/>
            <person name="Idesawa K."/>
            <person name="Iriguchi M."/>
            <person name="Kawashima K."/>
            <person name="Kohara M."/>
            <person name="Matsumoto M."/>
            <person name="Shimpo S."/>
            <person name="Tsuruoka H."/>
            <person name="Wada T."/>
            <person name="Yamada M."/>
            <person name="Tabata S."/>
        </authorList>
    </citation>
    <scope>NUCLEOTIDE SEQUENCE [LARGE SCALE GENOMIC DNA]</scope>
    <source>
        <strain>JCM 10833 / BCRC 13528 / IAM 13628 / NBRC 14792 / USDA 110</strain>
    </source>
</reference>
<accession>Q89UL7</accession>
<protein>
    <recommendedName>
        <fullName evidence="1">Homoserine O-acetyltransferase</fullName>
        <shortName evidence="1">HAT</shortName>
        <ecNumber evidence="1">2.3.1.31</ecNumber>
    </recommendedName>
    <alternativeName>
        <fullName evidence="1">Homoserine transacetylase</fullName>
        <shortName evidence="1">HTA</shortName>
    </alternativeName>
</protein>
<comment type="function">
    <text evidence="1">Transfers an acetyl group from acetyl-CoA to L-homoserine, forming acetyl-L-homoserine.</text>
</comment>
<comment type="catalytic activity">
    <reaction evidence="1">
        <text>L-homoserine + acetyl-CoA = O-acetyl-L-homoserine + CoA</text>
        <dbReference type="Rhea" id="RHEA:13701"/>
        <dbReference type="ChEBI" id="CHEBI:57287"/>
        <dbReference type="ChEBI" id="CHEBI:57288"/>
        <dbReference type="ChEBI" id="CHEBI:57476"/>
        <dbReference type="ChEBI" id="CHEBI:57716"/>
        <dbReference type="EC" id="2.3.1.31"/>
    </reaction>
</comment>
<comment type="pathway">
    <text evidence="1">Amino-acid biosynthesis; L-methionine biosynthesis via de novo pathway; O-acetyl-L-homoserine from L-homoserine: step 1/1.</text>
</comment>
<comment type="subunit">
    <text evidence="1">Homodimer.</text>
</comment>
<comment type="subcellular location">
    <subcellularLocation>
        <location evidence="1">Cytoplasm</location>
    </subcellularLocation>
</comment>
<comment type="similarity">
    <text evidence="1">Belongs to the AB hydrolase superfamily. MetX family.</text>
</comment>